<keyword id="KW-0021">Allosteric enzyme</keyword>
<keyword id="KW-0067">ATP-binding</keyword>
<keyword id="KW-0963">Cytoplasm</keyword>
<keyword id="KW-0237">DNA synthesis</keyword>
<keyword id="KW-0418">Kinase</keyword>
<keyword id="KW-0479">Metal-binding</keyword>
<keyword id="KW-0547">Nucleotide-binding</keyword>
<keyword id="KW-1185">Reference proteome</keyword>
<keyword id="KW-0808">Transferase</keyword>
<keyword id="KW-0862">Zinc</keyword>
<feature type="chain" id="PRO_0000174973" description="Thymidine kinase">
    <location>
        <begin position="1"/>
        <end position="205"/>
    </location>
</feature>
<feature type="active site" description="Proton acceptor" evidence="2">
    <location>
        <position position="88"/>
    </location>
</feature>
<feature type="binding site" evidence="2">
    <location>
        <begin position="9"/>
        <end position="16"/>
    </location>
    <ligand>
        <name>ATP</name>
        <dbReference type="ChEBI" id="CHEBI:30616"/>
    </ligand>
</feature>
<feature type="binding site" evidence="2">
    <location>
        <begin position="87"/>
        <end position="90"/>
    </location>
    <ligand>
        <name>ATP</name>
        <dbReference type="ChEBI" id="CHEBI:30616"/>
    </ligand>
</feature>
<feature type="binding site" evidence="2">
    <location>
        <position position="145"/>
    </location>
    <ligand>
        <name>Zn(2+)</name>
        <dbReference type="ChEBI" id="CHEBI:29105"/>
    </ligand>
</feature>
<feature type="binding site" evidence="2">
    <location>
        <position position="147"/>
    </location>
    <ligand>
        <name>Zn(2+)</name>
        <dbReference type="ChEBI" id="CHEBI:29105"/>
    </ligand>
</feature>
<feature type="binding site" evidence="2">
    <location>
        <position position="182"/>
    </location>
    <ligand>
        <name>Zn(2+)</name>
        <dbReference type="ChEBI" id="CHEBI:29105"/>
    </ligand>
</feature>
<feature type="binding site" evidence="2">
    <location>
        <position position="185"/>
    </location>
    <ligand>
        <name>Zn(2+)</name>
        <dbReference type="ChEBI" id="CHEBI:29105"/>
    </ligand>
</feature>
<reference key="1">
    <citation type="journal article" date="1999" name="Microb. Pathog.">
        <title>Analysis of the genes responsible for the O-antigen synthesis in enterohaemorrhagic Escherichia coli O157.</title>
        <authorList>
            <person name="Shimizu T."/>
            <person name="Yamasaki S."/>
            <person name="Tsukamoto T."/>
            <person name="Takeda Y."/>
        </authorList>
    </citation>
    <scope>NUCLEOTIDE SEQUENCE [GENOMIC DNA]</scope>
    <source>
        <strain>O157:H- / 184 / EHEC</strain>
    </source>
</reference>
<reference key="2">
    <citation type="journal article" date="2001" name="Nature">
        <title>Genome sequence of enterohaemorrhagic Escherichia coli O157:H7.</title>
        <authorList>
            <person name="Perna N.T."/>
            <person name="Plunkett G. III"/>
            <person name="Burland V."/>
            <person name="Mau B."/>
            <person name="Glasner J.D."/>
            <person name="Rose D.J."/>
            <person name="Mayhew G.F."/>
            <person name="Evans P.S."/>
            <person name="Gregor J."/>
            <person name="Kirkpatrick H.A."/>
            <person name="Posfai G."/>
            <person name="Hackett J."/>
            <person name="Klink S."/>
            <person name="Boutin A."/>
            <person name="Shao Y."/>
            <person name="Miller L."/>
            <person name="Grotbeck E.J."/>
            <person name="Davis N.W."/>
            <person name="Lim A."/>
            <person name="Dimalanta E.T."/>
            <person name="Potamousis K."/>
            <person name="Apodaca J."/>
            <person name="Anantharaman T.S."/>
            <person name="Lin J."/>
            <person name="Yen G."/>
            <person name="Schwartz D.C."/>
            <person name="Welch R.A."/>
            <person name="Blattner F.R."/>
        </authorList>
    </citation>
    <scope>NUCLEOTIDE SEQUENCE [LARGE SCALE GENOMIC DNA]</scope>
    <source>
        <strain>O157:H7 / EDL933 / ATCC 700927 / EHEC</strain>
    </source>
</reference>
<reference key="3">
    <citation type="journal article" date="2001" name="DNA Res.">
        <title>Complete genome sequence of enterohemorrhagic Escherichia coli O157:H7 and genomic comparison with a laboratory strain K-12.</title>
        <authorList>
            <person name="Hayashi T."/>
            <person name="Makino K."/>
            <person name="Ohnishi M."/>
            <person name="Kurokawa K."/>
            <person name="Ishii K."/>
            <person name="Yokoyama K."/>
            <person name="Han C.-G."/>
            <person name="Ohtsubo E."/>
            <person name="Nakayama K."/>
            <person name="Murata T."/>
            <person name="Tanaka M."/>
            <person name="Tobe T."/>
            <person name="Iida T."/>
            <person name="Takami H."/>
            <person name="Honda T."/>
            <person name="Sasakawa C."/>
            <person name="Ogasawara N."/>
            <person name="Yasunaga T."/>
            <person name="Kuhara S."/>
            <person name="Shiba T."/>
            <person name="Hattori M."/>
            <person name="Shinagawa H."/>
        </authorList>
    </citation>
    <scope>NUCLEOTIDE SEQUENCE [LARGE SCALE GENOMIC DNA]</scope>
    <source>
        <strain>O157:H7 / Sakai / RIMD 0509952 / EHEC</strain>
    </source>
</reference>
<dbReference type="EC" id="2.7.1.21" evidence="2"/>
<dbReference type="EMBL" id="AB008676">
    <property type="protein sequence ID" value="BAA77748.1"/>
    <property type="molecule type" value="Genomic_DNA"/>
</dbReference>
<dbReference type="EMBL" id="AE005174">
    <property type="protein sequence ID" value="AAG56095.1"/>
    <property type="molecule type" value="Genomic_DNA"/>
</dbReference>
<dbReference type="EMBL" id="BA000007">
    <property type="protein sequence ID" value="BAB35163.1"/>
    <property type="molecule type" value="Genomic_DNA"/>
</dbReference>
<dbReference type="PIR" id="C85704">
    <property type="entry name" value="C85704"/>
</dbReference>
<dbReference type="PIR" id="D90846">
    <property type="entry name" value="D90846"/>
</dbReference>
<dbReference type="RefSeq" id="NP_309767.1">
    <property type="nucleotide sequence ID" value="NC_002695.1"/>
</dbReference>
<dbReference type="RefSeq" id="WP_000068079.1">
    <property type="nucleotide sequence ID" value="NZ_VOAI01000031.1"/>
</dbReference>
<dbReference type="SMR" id="P0A3L9"/>
<dbReference type="STRING" id="155864.Z2015"/>
<dbReference type="GeneID" id="913112"/>
<dbReference type="GeneID" id="93775304"/>
<dbReference type="KEGG" id="ece:Z2015"/>
<dbReference type="KEGG" id="ecs:ECs_1740"/>
<dbReference type="PATRIC" id="fig|386585.9.peg.1841"/>
<dbReference type="eggNOG" id="COG1435">
    <property type="taxonomic scope" value="Bacteria"/>
</dbReference>
<dbReference type="HOGENOM" id="CLU_064400_2_1_6"/>
<dbReference type="OMA" id="GTMDCGK"/>
<dbReference type="Proteomes" id="UP000000558">
    <property type="component" value="Chromosome"/>
</dbReference>
<dbReference type="Proteomes" id="UP000002519">
    <property type="component" value="Chromosome"/>
</dbReference>
<dbReference type="GO" id="GO:0005829">
    <property type="term" value="C:cytosol"/>
    <property type="evidence" value="ECO:0007669"/>
    <property type="project" value="TreeGrafter"/>
</dbReference>
<dbReference type="GO" id="GO:0005524">
    <property type="term" value="F:ATP binding"/>
    <property type="evidence" value="ECO:0007669"/>
    <property type="project" value="UniProtKB-UniRule"/>
</dbReference>
<dbReference type="GO" id="GO:0004797">
    <property type="term" value="F:thymidine kinase activity"/>
    <property type="evidence" value="ECO:0007669"/>
    <property type="project" value="UniProtKB-UniRule"/>
</dbReference>
<dbReference type="GO" id="GO:0008270">
    <property type="term" value="F:zinc ion binding"/>
    <property type="evidence" value="ECO:0007669"/>
    <property type="project" value="UniProtKB-UniRule"/>
</dbReference>
<dbReference type="GO" id="GO:0071897">
    <property type="term" value="P:DNA biosynthetic process"/>
    <property type="evidence" value="ECO:0007669"/>
    <property type="project" value="UniProtKB-KW"/>
</dbReference>
<dbReference type="GO" id="GO:0046104">
    <property type="term" value="P:thymidine metabolic process"/>
    <property type="evidence" value="ECO:0007669"/>
    <property type="project" value="TreeGrafter"/>
</dbReference>
<dbReference type="FunFam" id="3.30.60.20:FF:000017">
    <property type="entry name" value="Thymidine kinase"/>
    <property type="match status" value="1"/>
</dbReference>
<dbReference type="FunFam" id="3.40.50.300:FF:000323">
    <property type="entry name" value="Thymidine kinase"/>
    <property type="match status" value="1"/>
</dbReference>
<dbReference type="Gene3D" id="3.30.60.20">
    <property type="match status" value="1"/>
</dbReference>
<dbReference type="Gene3D" id="3.40.50.300">
    <property type="entry name" value="P-loop containing nucleotide triphosphate hydrolases"/>
    <property type="match status" value="1"/>
</dbReference>
<dbReference type="HAMAP" id="MF_00124">
    <property type="entry name" value="Thymidine_kinase"/>
    <property type="match status" value="1"/>
</dbReference>
<dbReference type="InterPro" id="IPR027417">
    <property type="entry name" value="P-loop_NTPase"/>
</dbReference>
<dbReference type="InterPro" id="IPR001267">
    <property type="entry name" value="Thymidine_kinase"/>
</dbReference>
<dbReference type="InterPro" id="IPR020633">
    <property type="entry name" value="Thymidine_kinase_CS"/>
</dbReference>
<dbReference type="NCBIfam" id="NF003298">
    <property type="entry name" value="PRK04296.1-3"/>
    <property type="match status" value="1"/>
</dbReference>
<dbReference type="NCBIfam" id="NF003300">
    <property type="entry name" value="PRK04296.1-5"/>
    <property type="match status" value="1"/>
</dbReference>
<dbReference type="PANTHER" id="PTHR11441">
    <property type="entry name" value="THYMIDINE KINASE"/>
    <property type="match status" value="1"/>
</dbReference>
<dbReference type="PANTHER" id="PTHR11441:SF0">
    <property type="entry name" value="THYMIDINE KINASE, CYTOSOLIC"/>
    <property type="match status" value="1"/>
</dbReference>
<dbReference type="Pfam" id="PF00265">
    <property type="entry name" value="TK"/>
    <property type="match status" value="1"/>
</dbReference>
<dbReference type="PIRSF" id="PIRSF035805">
    <property type="entry name" value="TK_cell"/>
    <property type="match status" value="1"/>
</dbReference>
<dbReference type="SUPFAM" id="SSF57716">
    <property type="entry name" value="Glucocorticoid receptor-like (DNA-binding domain)"/>
    <property type="match status" value="1"/>
</dbReference>
<dbReference type="SUPFAM" id="SSF52540">
    <property type="entry name" value="P-loop containing nucleoside triphosphate hydrolases"/>
    <property type="match status" value="1"/>
</dbReference>
<dbReference type="PROSITE" id="PS00603">
    <property type="entry name" value="TK_CELLULAR_TYPE"/>
    <property type="match status" value="1"/>
</dbReference>
<organism>
    <name type="scientific">Escherichia coli O157:H7</name>
    <dbReference type="NCBI Taxonomy" id="83334"/>
    <lineage>
        <taxon>Bacteria</taxon>
        <taxon>Pseudomonadati</taxon>
        <taxon>Pseudomonadota</taxon>
        <taxon>Gammaproteobacteria</taxon>
        <taxon>Enterobacterales</taxon>
        <taxon>Enterobacteriaceae</taxon>
        <taxon>Escherichia</taxon>
    </lineage>
</organism>
<protein>
    <recommendedName>
        <fullName evidence="2">Thymidine kinase</fullName>
        <ecNumber evidence="2">2.7.1.21</ecNumber>
    </recommendedName>
</protein>
<proteinExistence type="inferred from homology"/>
<evidence type="ECO:0000250" key="1"/>
<evidence type="ECO:0000255" key="2">
    <source>
        <dbReference type="HAMAP-Rule" id="MF_00124"/>
    </source>
</evidence>
<comment type="function">
    <text evidence="1">Phosphorylates both thymidine and deoxyuridine.</text>
</comment>
<comment type="catalytic activity">
    <reaction evidence="2">
        <text>thymidine + ATP = dTMP + ADP + H(+)</text>
        <dbReference type="Rhea" id="RHEA:19129"/>
        <dbReference type="ChEBI" id="CHEBI:15378"/>
        <dbReference type="ChEBI" id="CHEBI:17748"/>
        <dbReference type="ChEBI" id="CHEBI:30616"/>
        <dbReference type="ChEBI" id="CHEBI:63528"/>
        <dbReference type="ChEBI" id="CHEBI:456216"/>
        <dbReference type="EC" id="2.7.1.21"/>
    </reaction>
</comment>
<comment type="activity regulation">
    <text evidence="1">Allosteric enzyme which is feedback inhibited by dTTP and activated by a number of dNDP and dNTP.</text>
</comment>
<comment type="subunit">
    <text evidence="2">Homotetramer.</text>
</comment>
<comment type="subcellular location">
    <subcellularLocation>
        <location evidence="2">Cytoplasm</location>
    </subcellularLocation>
</comment>
<comment type="similarity">
    <text evidence="2">Belongs to the thymidine kinase family.</text>
</comment>
<name>KITH_ECO57</name>
<accession>P0A3L9</accession>
<accession>Q9S5G7</accession>
<gene>
    <name evidence="2" type="primary">tdk</name>
    <name type="ordered locus">Z2015</name>
    <name type="ordered locus">ECs1740</name>
</gene>
<sequence length="205" mass="23399">MAQLYFYYSAMNAGKSTALLQSSYNYQERGMRTVVYTAEIDDRFGAGKVSSRIGLSSPAKLFNQNSSLFDEIRAEHEQQAIHCVLVDECQFLTRQQVYELSEVVDQLDIPVLCYGLRTDFRGELFIGSQYLLAWSDKLVELKTICFCGRKASMVLRLDQAGRPYNEGEQVVIGGNERYVSVCRKHYKEALQVGSLTAIQERHRHD</sequence>